<proteinExistence type="evidence at protein level"/>
<name>TM245_MOUSE</name>
<organism>
    <name type="scientific">Mus musculus</name>
    <name type="common">Mouse</name>
    <dbReference type="NCBI Taxonomy" id="10090"/>
    <lineage>
        <taxon>Eukaryota</taxon>
        <taxon>Metazoa</taxon>
        <taxon>Chordata</taxon>
        <taxon>Craniata</taxon>
        <taxon>Vertebrata</taxon>
        <taxon>Euteleostomi</taxon>
        <taxon>Mammalia</taxon>
        <taxon>Eutheria</taxon>
        <taxon>Euarchontoglires</taxon>
        <taxon>Glires</taxon>
        <taxon>Rodentia</taxon>
        <taxon>Myomorpha</taxon>
        <taxon>Muroidea</taxon>
        <taxon>Muridae</taxon>
        <taxon>Murinae</taxon>
        <taxon>Mus</taxon>
        <taxon>Mus</taxon>
    </lineage>
</organism>
<gene>
    <name type="primary">Tmem245</name>
</gene>
<feature type="initiator methionine" description="Removed" evidence="6">
    <location>
        <position position="1"/>
    </location>
</feature>
<feature type="chain" id="PRO_0000417169" description="Transmembrane protein 245">
    <location>
        <begin position="2"/>
        <end position="876"/>
    </location>
</feature>
<feature type="transmembrane region" description="Helical" evidence="3">
    <location>
        <begin position="56"/>
        <end position="76"/>
    </location>
</feature>
<feature type="transmembrane region" description="Helical" evidence="3">
    <location>
        <begin position="115"/>
        <end position="135"/>
    </location>
</feature>
<feature type="transmembrane region" description="Helical" evidence="3">
    <location>
        <begin position="144"/>
        <end position="164"/>
    </location>
</feature>
<feature type="transmembrane region" description="Helical" evidence="3">
    <location>
        <begin position="181"/>
        <end position="201"/>
    </location>
</feature>
<feature type="transmembrane region" description="Helical" evidence="3">
    <location>
        <begin position="215"/>
        <end position="235"/>
    </location>
</feature>
<feature type="transmembrane region" description="Helical" evidence="3">
    <location>
        <begin position="237"/>
        <end position="257"/>
    </location>
</feature>
<feature type="transmembrane region" description="Helical" evidence="3">
    <location>
        <begin position="351"/>
        <end position="371"/>
    </location>
</feature>
<feature type="transmembrane region" description="Helical" evidence="3">
    <location>
        <begin position="377"/>
        <end position="397"/>
    </location>
</feature>
<feature type="transmembrane region" description="Helical" evidence="3">
    <location>
        <begin position="457"/>
        <end position="477"/>
    </location>
</feature>
<feature type="transmembrane region" description="Helical" evidence="3">
    <location>
        <begin position="623"/>
        <end position="643"/>
    </location>
</feature>
<feature type="transmembrane region" description="Helical" evidence="3">
    <location>
        <begin position="647"/>
        <end position="667"/>
    </location>
</feature>
<feature type="transmembrane region" description="Helical" evidence="3">
    <location>
        <begin position="728"/>
        <end position="748"/>
    </location>
</feature>
<feature type="transmembrane region" description="Helical" evidence="3">
    <location>
        <begin position="749"/>
        <end position="769"/>
    </location>
</feature>
<feature type="transmembrane region" description="Helical" evidence="3">
    <location>
        <begin position="773"/>
        <end position="793"/>
    </location>
</feature>
<feature type="transmembrane region" description="Helical" evidence="3">
    <location>
        <begin position="812"/>
        <end position="832"/>
    </location>
</feature>
<feature type="region of interest" description="Disordered" evidence="4">
    <location>
        <begin position="1"/>
        <end position="32"/>
    </location>
</feature>
<feature type="region of interest" description="Disordered" evidence="4">
    <location>
        <begin position="289"/>
        <end position="338"/>
    </location>
</feature>
<feature type="compositionally biased region" description="Low complexity" evidence="4">
    <location>
        <begin position="1"/>
        <end position="15"/>
    </location>
</feature>
<feature type="compositionally biased region" description="Low complexity" evidence="4">
    <location>
        <begin position="313"/>
        <end position="330"/>
    </location>
</feature>
<feature type="modified residue" description="N-acetylalanine" evidence="6">
    <location>
        <position position="2"/>
    </location>
</feature>
<feature type="modified residue" description="Phosphoserine" evidence="6 7 8">
    <location>
        <position position="12"/>
    </location>
</feature>
<feature type="modified residue" description="Phosphoserine" evidence="6">
    <location>
        <position position="16"/>
    </location>
</feature>
<feature type="modified residue" description="Phosphothreonine" evidence="2">
    <location>
        <position position="32"/>
    </location>
</feature>
<feature type="modified residue" description="Phosphoserine" evidence="2">
    <location>
        <position position="320"/>
    </location>
</feature>
<feature type="modified residue" description="Phosphoserine" evidence="2">
    <location>
        <position position="324"/>
    </location>
</feature>
<feature type="modified residue" description="Phosphoserine" evidence="1">
    <location>
        <position position="327"/>
    </location>
</feature>
<feature type="modified residue" description="Phosphoserine" evidence="2">
    <location>
        <position position="329"/>
    </location>
</feature>
<feature type="modified residue" description="Phosphothreonine" evidence="2">
    <location>
        <position position="331"/>
    </location>
</feature>
<feature type="modified residue" description="Phosphoserine" evidence="2">
    <location>
        <position position="874"/>
    </location>
</feature>
<feature type="glycosylation site" description="N-linked (GlcNAc...) asparagine" evidence="3">
    <location>
        <position position="206"/>
    </location>
</feature>
<feature type="glycosylation site" description="N-linked (GlcNAc...) asparagine" evidence="3">
    <location>
        <position position="497"/>
    </location>
</feature>
<feature type="glycosylation site" description="N-linked (GlcNAc...) asparagine" evidence="3">
    <location>
        <position position="548"/>
    </location>
</feature>
<feature type="glycosylation site" description="N-linked (GlcNAc...) asparagine" evidence="3">
    <location>
        <position position="572"/>
    </location>
</feature>
<protein>
    <recommendedName>
        <fullName>Transmembrane protein 245</fullName>
    </recommendedName>
</protein>
<comment type="subcellular location">
    <subcellularLocation>
        <location evidence="5">Membrane</location>
        <topology evidence="5">Multi-pass membrane protein</topology>
    </subcellularLocation>
</comment>
<comment type="similarity">
    <text evidence="5">Belongs to the autoinducer-2 exporter (AI-2E) (TC 2.A.86) family.</text>
</comment>
<dbReference type="EMBL" id="AL929577">
    <property type="status" value="NOT_ANNOTATED_CDS"/>
    <property type="molecule type" value="Genomic_DNA"/>
</dbReference>
<dbReference type="EMBL" id="BX470220">
    <property type="status" value="NOT_ANNOTATED_CDS"/>
    <property type="molecule type" value="Genomic_DNA"/>
</dbReference>
<dbReference type="CCDS" id="CCDS89746.1"/>
<dbReference type="RefSeq" id="NP_001356189.1">
    <property type="nucleotide sequence ID" value="NM_001369260.1"/>
</dbReference>
<dbReference type="RefSeq" id="XP_006537988.1">
    <property type="nucleotide sequence ID" value="XM_006537925.3"/>
</dbReference>
<dbReference type="FunCoup" id="B1AZA5">
    <property type="interactions" value="3324"/>
</dbReference>
<dbReference type="STRING" id="10090.ENSMUSP00000103234"/>
<dbReference type="GlyConnect" id="2794">
    <property type="glycosylation" value="1 N-Linked glycan (1 site)"/>
</dbReference>
<dbReference type="GlyCosmos" id="B1AZA5">
    <property type="glycosylation" value="4 sites, 1 glycan"/>
</dbReference>
<dbReference type="GlyGen" id="B1AZA5">
    <property type="glycosylation" value="4 sites, 2 N-linked glycans (2 sites)"/>
</dbReference>
<dbReference type="iPTMnet" id="B1AZA5"/>
<dbReference type="PhosphoSitePlus" id="B1AZA5"/>
<dbReference type="jPOST" id="B1AZA5"/>
<dbReference type="PaxDb" id="10090-ENSMUSP00000103234"/>
<dbReference type="PeptideAtlas" id="B1AZA5"/>
<dbReference type="ProteomicsDB" id="259417"/>
<dbReference type="Pumba" id="B1AZA5"/>
<dbReference type="Antibodypedia" id="7137">
    <property type="antibodies" value="39 antibodies from 8 providers"/>
</dbReference>
<dbReference type="Ensembl" id="ENSMUST00000068792.13">
    <property type="protein sequence ID" value="ENSMUSP00000067421.7"/>
    <property type="gene ID" value="ENSMUSG00000055296.15"/>
</dbReference>
<dbReference type="GeneID" id="242474"/>
<dbReference type="AGR" id="MGI:2445107"/>
<dbReference type="MGI" id="MGI:2445107">
    <property type="gene designation" value="Tmem245"/>
</dbReference>
<dbReference type="VEuPathDB" id="HostDB:ENSMUSG00000055296"/>
<dbReference type="eggNOG" id="KOG2365">
    <property type="taxonomic scope" value="Eukaryota"/>
</dbReference>
<dbReference type="GeneTree" id="ENSGT00390000001667"/>
<dbReference type="HOGENOM" id="CLU_005960_0_0_1"/>
<dbReference type="InParanoid" id="B1AZA5"/>
<dbReference type="BioGRID-ORCS" id="242474">
    <property type="hits" value="3 hits in 61 CRISPR screens"/>
</dbReference>
<dbReference type="ChiTaRS" id="Tmem245">
    <property type="organism name" value="mouse"/>
</dbReference>
<dbReference type="PRO" id="PR:B1AZA5"/>
<dbReference type="Proteomes" id="UP000000589">
    <property type="component" value="Chromosome 4"/>
</dbReference>
<dbReference type="RNAct" id="B1AZA5">
    <property type="molecule type" value="protein"/>
</dbReference>
<dbReference type="Bgee" id="ENSMUSG00000055296">
    <property type="expression patterns" value="Expressed in ascending aorta and 237 other cell types or tissues"/>
</dbReference>
<dbReference type="ExpressionAtlas" id="B1AZA5">
    <property type="expression patterns" value="baseline and differential"/>
</dbReference>
<dbReference type="GO" id="GO:0016020">
    <property type="term" value="C:membrane"/>
    <property type="evidence" value="ECO:0007669"/>
    <property type="project" value="UniProtKB-SubCell"/>
</dbReference>
<dbReference type="InterPro" id="IPR002549">
    <property type="entry name" value="AI-2E-like"/>
</dbReference>
<dbReference type="PANTHER" id="PTHR21716">
    <property type="entry name" value="TRANSMEMBRANE PROTEIN"/>
    <property type="match status" value="1"/>
</dbReference>
<dbReference type="PANTHER" id="PTHR21716:SF4">
    <property type="entry name" value="TRANSMEMBRANE PROTEIN 245"/>
    <property type="match status" value="1"/>
</dbReference>
<dbReference type="Pfam" id="PF01594">
    <property type="entry name" value="AI-2E_transport"/>
    <property type="match status" value="1"/>
</dbReference>
<sequence>MADRGGPAEAPSPRGSPRPESRAPRTVGPGETPRTAALALRFDKPIKQAFYNTGAVLFVCLCCGAAVLVYFILEAFLRPLLWAVLCGTFLHPFKSSLTRLGRLWLRRLHRAHTPIVLAALLLPLCFADYGVEALGEQALRRRRLLLLLGAGGPLLYGLYCLGSYLGVQVLLAHAGALICRGLDYFSSLWIWTLVVGYVLMVSFKWNASTQRYLRAVSIPVWMILLFHIASLAGSWRIPVFLVIVFLMSVGTLYEKQNEKESAGAELPGQVISMAASTLANLAISITGYESSTEDQPSDPPTEPTDKGEPPPALSASSSSSSRSSPSSPSPTLGRQRPEMGTFLRKKKTSDIYFVSLVWAIIAVQLWLNLWIVQLLPVPVAVWIIKKLVIHFGVVGFLEKRCHAWWQVIECFLKERQEALAPWPIIGLGKFLLKVDSKLWHWLNKKMIIWLEKMLDKIISIFIIFLLVIGTLLLALLLTAKVHQESVHMIEVTSSLINETLANHPEWANWLPEAQVVQRALNSAANNVYQYGREWITHKLHKILGDKVNNTAVIEKQVLELWDRLYHSWFVKNVTHSGRHKGHKMHVSRQNSWLGDILDWQDIASFVHENIETFLSILESLWIVMSRNVSLLFTTVTTLLTILFYSGTALLNFVLSLIIFLTTLFYLLSSSDEYYKPVKWVISLTPLSQPGPSSNIIGQSVEEAIRGVFDASLKMAGFYGLYTWLTHTIFGINIVFIPSALAAILGAVPFLGTYWAAVPAVLDLWLTQGLGCKAILLLVFHLLPTYFVDTAIYSDISGGGHPYLTGLAVAGGAYYLGLEGAIIGPILLCILVVASNIYSAMLVSPTNSMPTPNQTPWPAQTQRTFRDISEDLKSSVD</sequence>
<accession>B1AZA5</accession>
<evidence type="ECO:0000250" key="1">
    <source>
        <dbReference type="UniProtKB" id="D3ZXD8"/>
    </source>
</evidence>
<evidence type="ECO:0000250" key="2">
    <source>
        <dbReference type="UniProtKB" id="Q9H330"/>
    </source>
</evidence>
<evidence type="ECO:0000255" key="3"/>
<evidence type="ECO:0000256" key="4">
    <source>
        <dbReference type="SAM" id="MobiDB-lite"/>
    </source>
</evidence>
<evidence type="ECO:0000305" key="5"/>
<evidence type="ECO:0007744" key="6">
    <source>
    </source>
</evidence>
<evidence type="ECO:0007744" key="7">
    <source>
    </source>
</evidence>
<evidence type="ECO:0007744" key="8">
    <source>
    </source>
</evidence>
<keyword id="KW-0007">Acetylation</keyword>
<keyword id="KW-0325">Glycoprotein</keyword>
<keyword id="KW-0472">Membrane</keyword>
<keyword id="KW-0597">Phosphoprotein</keyword>
<keyword id="KW-1185">Reference proteome</keyword>
<keyword id="KW-0812">Transmembrane</keyword>
<keyword id="KW-1133">Transmembrane helix</keyword>
<reference key="1">
    <citation type="journal article" date="2009" name="PLoS Biol.">
        <title>Lineage-specific biology revealed by a finished genome assembly of the mouse.</title>
        <authorList>
            <person name="Church D.M."/>
            <person name="Goodstadt L."/>
            <person name="Hillier L.W."/>
            <person name="Zody M.C."/>
            <person name="Goldstein S."/>
            <person name="She X."/>
            <person name="Bult C.J."/>
            <person name="Agarwala R."/>
            <person name="Cherry J.L."/>
            <person name="DiCuccio M."/>
            <person name="Hlavina W."/>
            <person name="Kapustin Y."/>
            <person name="Meric P."/>
            <person name="Maglott D."/>
            <person name="Birtle Z."/>
            <person name="Marques A.C."/>
            <person name="Graves T."/>
            <person name="Zhou S."/>
            <person name="Teague B."/>
            <person name="Potamousis K."/>
            <person name="Churas C."/>
            <person name="Place M."/>
            <person name="Herschleb J."/>
            <person name="Runnheim R."/>
            <person name="Forrest D."/>
            <person name="Amos-Landgraf J."/>
            <person name="Schwartz D.C."/>
            <person name="Cheng Z."/>
            <person name="Lindblad-Toh K."/>
            <person name="Eichler E.E."/>
            <person name="Ponting C.P."/>
        </authorList>
    </citation>
    <scope>NUCLEOTIDE SEQUENCE [LARGE SCALE GENOMIC DNA]</scope>
    <source>
        <strain>C57BL/6J</strain>
    </source>
</reference>
<reference key="2">
    <citation type="journal article" date="2009" name="Immunity">
        <title>The phagosomal proteome in interferon-gamma-activated macrophages.</title>
        <authorList>
            <person name="Trost M."/>
            <person name="English L."/>
            <person name="Lemieux S."/>
            <person name="Courcelles M."/>
            <person name="Desjardins M."/>
            <person name="Thibault P."/>
        </authorList>
    </citation>
    <scope>PHOSPHORYLATION [LARGE SCALE ANALYSIS] AT SER-12</scope>
    <scope>IDENTIFICATION BY MASS SPECTROMETRY [LARGE SCALE ANALYSIS]</scope>
</reference>
<reference key="3">
    <citation type="journal article" date="2009" name="Mol. Cell. Proteomics">
        <title>Large scale localization of protein phosphorylation by use of electron capture dissociation mass spectrometry.</title>
        <authorList>
            <person name="Sweet S.M."/>
            <person name="Bailey C.M."/>
            <person name="Cunningham D.L."/>
            <person name="Heath J.K."/>
            <person name="Cooper H.J."/>
        </authorList>
    </citation>
    <scope>ACETYLATION [LARGE SCALE ANALYSIS] AT ALA-2</scope>
    <scope>PHOSPHORYLATION [LARGE SCALE ANALYSIS] AT SER-12 AND SER-16</scope>
    <scope>CLEAVAGE OF INITIATOR METHIONINE [LARGE SCALE ANALYSIS]</scope>
    <scope>IDENTIFICATION BY MASS SPECTROMETRY [LARGE SCALE ANALYSIS]</scope>
    <source>
        <tissue>Embryonic fibroblast</tissue>
    </source>
</reference>
<reference key="4">
    <citation type="journal article" date="2010" name="Cell">
        <title>A tissue-specific atlas of mouse protein phosphorylation and expression.</title>
        <authorList>
            <person name="Huttlin E.L."/>
            <person name="Jedrychowski M.P."/>
            <person name="Elias J.E."/>
            <person name="Goswami T."/>
            <person name="Rad R."/>
            <person name="Beausoleil S.A."/>
            <person name="Villen J."/>
            <person name="Haas W."/>
            <person name="Sowa M.E."/>
            <person name="Gygi S.P."/>
        </authorList>
    </citation>
    <scope>PHOSPHORYLATION [LARGE SCALE ANALYSIS] AT SER-12</scope>
    <scope>IDENTIFICATION BY MASS SPECTROMETRY [LARGE SCALE ANALYSIS]</scope>
    <source>
        <tissue>Brain</tissue>
        <tissue>Kidney</tissue>
        <tissue>Lung</tissue>
        <tissue>Spleen</tissue>
        <tissue>Testis</tissue>
    </source>
</reference>